<evidence type="ECO:0000255" key="1">
    <source>
        <dbReference type="HAMAP-Rule" id="MF_01368"/>
    </source>
</evidence>
<evidence type="ECO:0000305" key="2"/>
<proteinExistence type="inferred from homology"/>
<organism>
    <name type="scientific">Bartonella henselae (strain ATCC 49882 / DSM 28221 / CCUG 30454 / Houston 1)</name>
    <name type="common">Rochalimaea henselae</name>
    <dbReference type="NCBI Taxonomy" id="283166"/>
    <lineage>
        <taxon>Bacteria</taxon>
        <taxon>Pseudomonadati</taxon>
        <taxon>Pseudomonadota</taxon>
        <taxon>Alphaproteobacteria</taxon>
        <taxon>Hyphomicrobiales</taxon>
        <taxon>Bartonellaceae</taxon>
        <taxon>Bartonella</taxon>
    </lineage>
</organism>
<protein>
    <recommendedName>
        <fullName evidence="1">Large ribosomal subunit protein bL17</fullName>
    </recommendedName>
    <alternativeName>
        <fullName evidence="2">50S ribosomal protein L17</fullName>
    </alternativeName>
</protein>
<gene>
    <name evidence="1" type="primary">rplQ</name>
    <name type="ordered locus">BH10260</name>
</gene>
<keyword id="KW-0687">Ribonucleoprotein</keyword>
<keyword id="KW-0689">Ribosomal protein</keyword>
<name>RL17_BARHE</name>
<feature type="chain" id="PRO_0000267831" description="Large ribosomal subunit protein bL17">
    <location>
        <begin position="1"/>
        <end position="142"/>
    </location>
</feature>
<sequence>MRHSKSGRKLNRTASHRKAMFANMAISLIEHEQIVTTLPKAKEIRPIVERLVTLGKRGGLHARRQAIASLRDAGKVAKLFDTLAPRYASRNGGYLRIMKAGFRTGDNAPMAVIEFVDRDVDAKGAVDRVRTESSANEKEASS</sequence>
<accession>Q6G2Z0</accession>
<reference key="1">
    <citation type="journal article" date="2004" name="Proc. Natl. Acad. Sci. U.S.A.">
        <title>The louse-borne human pathogen Bartonella quintana is a genomic derivative of the zoonotic agent Bartonella henselae.</title>
        <authorList>
            <person name="Alsmark U.C.M."/>
            <person name="Frank A.C."/>
            <person name="Karlberg E.O."/>
            <person name="Legault B.-A."/>
            <person name="Ardell D.H."/>
            <person name="Canbaeck B."/>
            <person name="Eriksson A.-S."/>
            <person name="Naeslund A.K."/>
            <person name="Handley S.A."/>
            <person name="Huvet M."/>
            <person name="La Scola B."/>
            <person name="Holmberg M."/>
            <person name="Andersson S.G.E."/>
        </authorList>
    </citation>
    <scope>NUCLEOTIDE SEQUENCE [LARGE SCALE GENOMIC DNA]</scope>
    <source>
        <strain>ATCC 49882 / DSM 28221 / CCUG 30454 / Houston 1</strain>
    </source>
</reference>
<comment type="subunit">
    <text evidence="1">Part of the 50S ribosomal subunit. Contacts protein L32.</text>
</comment>
<comment type="similarity">
    <text evidence="1">Belongs to the bacterial ribosomal protein bL17 family.</text>
</comment>
<dbReference type="EMBL" id="BX897699">
    <property type="protein sequence ID" value="CAF27817.1"/>
    <property type="molecule type" value="Genomic_DNA"/>
</dbReference>
<dbReference type="RefSeq" id="WP_011180890.1">
    <property type="nucleotide sequence ID" value="NZ_LRIJ02000001.1"/>
</dbReference>
<dbReference type="SMR" id="Q6G2Z0"/>
<dbReference type="PaxDb" id="283166-BH10260"/>
<dbReference type="EnsemblBacteria" id="CAF27817">
    <property type="protein sequence ID" value="CAF27817"/>
    <property type="gene ID" value="BH10260"/>
</dbReference>
<dbReference type="GeneID" id="92985288"/>
<dbReference type="KEGG" id="bhe:BH10260"/>
<dbReference type="eggNOG" id="COG0203">
    <property type="taxonomic scope" value="Bacteria"/>
</dbReference>
<dbReference type="OrthoDB" id="9809073at2"/>
<dbReference type="Proteomes" id="UP000000421">
    <property type="component" value="Chromosome"/>
</dbReference>
<dbReference type="GO" id="GO:0022625">
    <property type="term" value="C:cytosolic large ribosomal subunit"/>
    <property type="evidence" value="ECO:0007669"/>
    <property type="project" value="TreeGrafter"/>
</dbReference>
<dbReference type="GO" id="GO:0003735">
    <property type="term" value="F:structural constituent of ribosome"/>
    <property type="evidence" value="ECO:0007669"/>
    <property type="project" value="InterPro"/>
</dbReference>
<dbReference type="GO" id="GO:0006412">
    <property type="term" value="P:translation"/>
    <property type="evidence" value="ECO:0007669"/>
    <property type="project" value="UniProtKB-UniRule"/>
</dbReference>
<dbReference type="FunFam" id="3.90.1030.10:FF:000001">
    <property type="entry name" value="50S ribosomal protein L17"/>
    <property type="match status" value="1"/>
</dbReference>
<dbReference type="Gene3D" id="3.90.1030.10">
    <property type="entry name" value="Ribosomal protein L17"/>
    <property type="match status" value="1"/>
</dbReference>
<dbReference type="HAMAP" id="MF_01368">
    <property type="entry name" value="Ribosomal_bL17"/>
    <property type="match status" value="1"/>
</dbReference>
<dbReference type="InterPro" id="IPR000456">
    <property type="entry name" value="Ribosomal_bL17"/>
</dbReference>
<dbReference type="InterPro" id="IPR047859">
    <property type="entry name" value="Ribosomal_bL17_CS"/>
</dbReference>
<dbReference type="InterPro" id="IPR036373">
    <property type="entry name" value="Ribosomal_bL17_sf"/>
</dbReference>
<dbReference type="NCBIfam" id="TIGR00059">
    <property type="entry name" value="L17"/>
    <property type="match status" value="1"/>
</dbReference>
<dbReference type="PANTHER" id="PTHR14413:SF16">
    <property type="entry name" value="LARGE RIBOSOMAL SUBUNIT PROTEIN BL17M"/>
    <property type="match status" value="1"/>
</dbReference>
<dbReference type="PANTHER" id="PTHR14413">
    <property type="entry name" value="RIBOSOMAL PROTEIN L17"/>
    <property type="match status" value="1"/>
</dbReference>
<dbReference type="Pfam" id="PF01196">
    <property type="entry name" value="Ribosomal_L17"/>
    <property type="match status" value="1"/>
</dbReference>
<dbReference type="SUPFAM" id="SSF64263">
    <property type="entry name" value="Prokaryotic ribosomal protein L17"/>
    <property type="match status" value="1"/>
</dbReference>
<dbReference type="PROSITE" id="PS01167">
    <property type="entry name" value="RIBOSOMAL_L17"/>
    <property type="match status" value="1"/>
</dbReference>